<feature type="chain" id="PRO_1000008060" description="DNA mismatch repair protein MutS">
    <location>
        <begin position="1"/>
        <end position="804"/>
    </location>
</feature>
<feature type="binding site" evidence="1">
    <location>
        <begin position="614"/>
        <end position="621"/>
    </location>
    <ligand>
        <name>ATP</name>
        <dbReference type="ChEBI" id="CHEBI:30616"/>
    </ligand>
</feature>
<evidence type="ECO:0000255" key="1">
    <source>
        <dbReference type="HAMAP-Rule" id="MF_00096"/>
    </source>
</evidence>
<organism>
    <name type="scientific">Ehrlichia chaffeensis (strain ATCC CRL-10679 / Arkansas)</name>
    <dbReference type="NCBI Taxonomy" id="205920"/>
    <lineage>
        <taxon>Bacteria</taxon>
        <taxon>Pseudomonadati</taxon>
        <taxon>Pseudomonadota</taxon>
        <taxon>Alphaproteobacteria</taxon>
        <taxon>Rickettsiales</taxon>
        <taxon>Anaplasmataceae</taxon>
        <taxon>Ehrlichia</taxon>
    </lineage>
</organism>
<protein>
    <recommendedName>
        <fullName evidence="1">DNA mismatch repair protein MutS</fullName>
    </recommendedName>
</protein>
<gene>
    <name evidence="1" type="primary">mutS</name>
    <name type="ordered locus">ECH_0824</name>
</gene>
<proteinExistence type="inferred from homology"/>
<accession>Q2GG13</accession>
<comment type="function">
    <text evidence="1">This protein is involved in the repair of mismatches in DNA. It is possible that it carries out the mismatch recognition step. This protein has a weak ATPase activity.</text>
</comment>
<comment type="similarity">
    <text evidence="1">Belongs to the DNA mismatch repair MutS family.</text>
</comment>
<dbReference type="EMBL" id="CP000236">
    <property type="protein sequence ID" value="ABD45507.1"/>
    <property type="molecule type" value="Genomic_DNA"/>
</dbReference>
<dbReference type="RefSeq" id="WP_011452830.1">
    <property type="nucleotide sequence ID" value="NC_007799.1"/>
</dbReference>
<dbReference type="SMR" id="Q2GG13"/>
<dbReference type="STRING" id="205920.ECH_0824"/>
<dbReference type="KEGG" id="ech:ECH_0824"/>
<dbReference type="eggNOG" id="COG0249">
    <property type="taxonomic scope" value="Bacteria"/>
</dbReference>
<dbReference type="HOGENOM" id="CLU_002472_4_0_5"/>
<dbReference type="OrthoDB" id="9802448at2"/>
<dbReference type="Proteomes" id="UP000008320">
    <property type="component" value="Chromosome"/>
</dbReference>
<dbReference type="GO" id="GO:0005524">
    <property type="term" value="F:ATP binding"/>
    <property type="evidence" value="ECO:0007669"/>
    <property type="project" value="UniProtKB-UniRule"/>
</dbReference>
<dbReference type="GO" id="GO:0140664">
    <property type="term" value="F:ATP-dependent DNA damage sensor activity"/>
    <property type="evidence" value="ECO:0007669"/>
    <property type="project" value="InterPro"/>
</dbReference>
<dbReference type="GO" id="GO:0003684">
    <property type="term" value="F:damaged DNA binding"/>
    <property type="evidence" value="ECO:0007669"/>
    <property type="project" value="UniProtKB-UniRule"/>
</dbReference>
<dbReference type="GO" id="GO:0030983">
    <property type="term" value="F:mismatched DNA binding"/>
    <property type="evidence" value="ECO:0007669"/>
    <property type="project" value="InterPro"/>
</dbReference>
<dbReference type="GO" id="GO:0006298">
    <property type="term" value="P:mismatch repair"/>
    <property type="evidence" value="ECO:0007669"/>
    <property type="project" value="UniProtKB-UniRule"/>
</dbReference>
<dbReference type="CDD" id="cd03284">
    <property type="entry name" value="ABC_MutS1"/>
    <property type="match status" value="1"/>
</dbReference>
<dbReference type="FunFam" id="3.40.1170.10:FF:000001">
    <property type="entry name" value="DNA mismatch repair protein MutS"/>
    <property type="match status" value="1"/>
</dbReference>
<dbReference type="FunFam" id="3.40.50.300:FF:000870">
    <property type="entry name" value="MutS protein homolog 4"/>
    <property type="match status" value="1"/>
</dbReference>
<dbReference type="Gene3D" id="1.10.1420.10">
    <property type="match status" value="2"/>
</dbReference>
<dbReference type="Gene3D" id="3.40.1170.10">
    <property type="entry name" value="DNA repair protein MutS, domain I"/>
    <property type="match status" value="1"/>
</dbReference>
<dbReference type="Gene3D" id="3.30.420.110">
    <property type="entry name" value="MutS, connector domain"/>
    <property type="match status" value="1"/>
</dbReference>
<dbReference type="Gene3D" id="3.40.50.300">
    <property type="entry name" value="P-loop containing nucleotide triphosphate hydrolases"/>
    <property type="match status" value="1"/>
</dbReference>
<dbReference type="HAMAP" id="MF_00096">
    <property type="entry name" value="MutS"/>
    <property type="match status" value="1"/>
</dbReference>
<dbReference type="InterPro" id="IPR005748">
    <property type="entry name" value="DNA_mismatch_repair_MutS"/>
</dbReference>
<dbReference type="InterPro" id="IPR007695">
    <property type="entry name" value="DNA_mismatch_repair_MutS-lik_N"/>
</dbReference>
<dbReference type="InterPro" id="IPR017261">
    <property type="entry name" value="DNA_mismatch_repair_MutS/MSH"/>
</dbReference>
<dbReference type="InterPro" id="IPR000432">
    <property type="entry name" value="DNA_mismatch_repair_MutS_C"/>
</dbReference>
<dbReference type="InterPro" id="IPR007861">
    <property type="entry name" value="DNA_mismatch_repair_MutS_clamp"/>
</dbReference>
<dbReference type="InterPro" id="IPR007696">
    <property type="entry name" value="DNA_mismatch_repair_MutS_core"/>
</dbReference>
<dbReference type="InterPro" id="IPR016151">
    <property type="entry name" value="DNA_mismatch_repair_MutS_N"/>
</dbReference>
<dbReference type="InterPro" id="IPR036187">
    <property type="entry name" value="DNA_mismatch_repair_MutS_sf"/>
</dbReference>
<dbReference type="InterPro" id="IPR007860">
    <property type="entry name" value="DNA_mmatch_repair_MutS_con_dom"/>
</dbReference>
<dbReference type="InterPro" id="IPR045076">
    <property type="entry name" value="MutS"/>
</dbReference>
<dbReference type="InterPro" id="IPR036678">
    <property type="entry name" value="MutS_con_dom_sf"/>
</dbReference>
<dbReference type="InterPro" id="IPR027417">
    <property type="entry name" value="P-loop_NTPase"/>
</dbReference>
<dbReference type="NCBIfam" id="TIGR01070">
    <property type="entry name" value="mutS1"/>
    <property type="match status" value="1"/>
</dbReference>
<dbReference type="NCBIfam" id="NF003810">
    <property type="entry name" value="PRK05399.1"/>
    <property type="match status" value="1"/>
</dbReference>
<dbReference type="PANTHER" id="PTHR11361:SF34">
    <property type="entry name" value="DNA MISMATCH REPAIR PROTEIN MSH1, MITOCHONDRIAL"/>
    <property type="match status" value="1"/>
</dbReference>
<dbReference type="PANTHER" id="PTHR11361">
    <property type="entry name" value="DNA MISMATCH REPAIR PROTEIN MUTS FAMILY MEMBER"/>
    <property type="match status" value="1"/>
</dbReference>
<dbReference type="Pfam" id="PF01624">
    <property type="entry name" value="MutS_I"/>
    <property type="match status" value="1"/>
</dbReference>
<dbReference type="Pfam" id="PF05188">
    <property type="entry name" value="MutS_II"/>
    <property type="match status" value="1"/>
</dbReference>
<dbReference type="Pfam" id="PF05192">
    <property type="entry name" value="MutS_III"/>
    <property type="match status" value="1"/>
</dbReference>
<dbReference type="Pfam" id="PF05190">
    <property type="entry name" value="MutS_IV"/>
    <property type="match status" value="1"/>
</dbReference>
<dbReference type="Pfam" id="PF00488">
    <property type="entry name" value="MutS_V"/>
    <property type="match status" value="1"/>
</dbReference>
<dbReference type="PIRSF" id="PIRSF037677">
    <property type="entry name" value="DNA_mis_repair_Msh6"/>
    <property type="match status" value="1"/>
</dbReference>
<dbReference type="SMART" id="SM00534">
    <property type="entry name" value="MUTSac"/>
    <property type="match status" value="1"/>
</dbReference>
<dbReference type="SMART" id="SM00533">
    <property type="entry name" value="MUTSd"/>
    <property type="match status" value="1"/>
</dbReference>
<dbReference type="SUPFAM" id="SSF55271">
    <property type="entry name" value="DNA repair protein MutS, domain I"/>
    <property type="match status" value="1"/>
</dbReference>
<dbReference type="SUPFAM" id="SSF53150">
    <property type="entry name" value="DNA repair protein MutS, domain II"/>
    <property type="match status" value="1"/>
</dbReference>
<dbReference type="SUPFAM" id="SSF48334">
    <property type="entry name" value="DNA repair protein MutS, domain III"/>
    <property type="match status" value="1"/>
</dbReference>
<dbReference type="SUPFAM" id="SSF52540">
    <property type="entry name" value="P-loop containing nucleoside triphosphate hydrolases"/>
    <property type="match status" value="1"/>
</dbReference>
<dbReference type="PROSITE" id="PS00486">
    <property type="entry name" value="DNA_MISMATCH_REPAIR_2"/>
    <property type="match status" value="1"/>
</dbReference>
<reference key="1">
    <citation type="journal article" date="2006" name="PLoS Genet.">
        <title>Comparative genomics of emerging human ehrlichiosis agents.</title>
        <authorList>
            <person name="Dunning Hotopp J.C."/>
            <person name="Lin M."/>
            <person name="Madupu R."/>
            <person name="Crabtree J."/>
            <person name="Angiuoli S.V."/>
            <person name="Eisen J.A."/>
            <person name="Seshadri R."/>
            <person name="Ren Q."/>
            <person name="Wu M."/>
            <person name="Utterback T.R."/>
            <person name="Smith S."/>
            <person name="Lewis M."/>
            <person name="Khouri H."/>
            <person name="Zhang C."/>
            <person name="Niu H."/>
            <person name="Lin Q."/>
            <person name="Ohashi N."/>
            <person name="Zhi N."/>
            <person name="Nelson W.C."/>
            <person name="Brinkac L.M."/>
            <person name="Dodson R.J."/>
            <person name="Rosovitz M.J."/>
            <person name="Sundaram J.P."/>
            <person name="Daugherty S.C."/>
            <person name="Davidsen T."/>
            <person name="Durkin A.S."/>
            <person name="Gwinn M.L."/>
            <person name="Haft D.H."/>
            <person name="Selengut J.D."/>
            <person name="Sullivan S.A."/>
            <person name="Zafar N."/>
            <person name="Zhou L."/>
            <person name="Benahmed F."/>
            <person name="Forberger H."/>
            <person name="Halpin R."/>
            <person name="Mulligan S."/>
            <person name="Robinson J."/>
            <person name="White O."/>
            <person name="Rikihisa Y."/>
            <person name="Tettelin H."/>
        </authorList>
    </citation>
    <scope>NUCLEOTIDE SEQUENCE [LARGE SCALE GENOMIC DNA]</scope>
    <source>
        <strain>ATCC CRL-10679 / Arkansas</strain>
    </source>
</reference>
<name>MUTS_EHRCR</name>
<keyword id="KW-0067">ATP-binding</keyword>
<keyword id="KW-0227">DNA damage</keyword>
<keyword id="KW-0234">DNA repair</keyword>
<keyword id="KW-0238">DNA-binding</keyword>
<keyword id="KW-0547">Nucleotide-binding</keyword>
<keyword id="KW-1185">Reference proteome</keyword>
<sequence>MNHDSKITPIMQQYMMLKSQYKEYLLFYRLGDFYELFFDDAIETSRILNIVLTKKGNVPMCGVPFHSSESYLNRLVKLGYKIAICEQLETSEEAKKRGYKALVKRDVVRIVTPGTILEDSLLEAKENNYLSCIVNVDHNYAIAWLELSTGLFYYHTTELHKLDSDLFRINPKEVLISDKLVELDSIYSILRKYKFSVTQYSGSFFDVSRSYNTLCNVYGISTLKGLGDLKNEEIAVCGSLLEYVKATQKGNLPQLEFPKAYSKGDFMFIDAAALRNLELFCTQSGDLEGSLISSIDYTITACGGRLLKRCLSAPLACSHAINRRLDIVEFFVNDRTLCRGVRETLRGIADIERILTRIKVGKCSPKDLYALKLTLDKIFVLLDLLHKFDSSVVGDFCSRLGKYDDLCKTLDDVLIPNNVNNVKDGGFINPDYDAQLSEYIYIQSYSNDLIQELRDKYRNITNIQSLKILYNNILGYYVEVSSSYLISDKDFIHRQTLANSIRYTTSELKALESKIISARDAAINLEVKIFGQLCTCIIEVADKITMTAHAIAEIDMLTSFAELAIQYSYTKPIVDDSYEFNIKKGRHPVVERNGKFVANDIDLSLMQRVHLITGPNMAGKSTFLRQNALIGILAHIGSFVPAQHAHIGVIDKVFSRVGASDNIASGHSTFMVEMTETAAIINQATDKSFVILDEIGRGTGTYDGLSIAWSVIEQIHNVNKSRAIFATHYHELSKLDRYLENIKCFCMKVEEWNGKVVFLHEIIPGSTNKSYGIHVAKLAGFPQSVLDRAEDLMSKLKANEDLLT</sequence>